<organism>
    <name type="scientific">Streptococcus pneumoniae (strain P1031)</name>
    <dbReference type="NCBI Taxonomy" id="488223"/>
    <lineage>
        <taxon>Bacteria</taxon>
        <taxon>Bacillati</taxon>
        <taxon>Bacillota</taxon>
        <taxon>Bacilli</taxon>
        <taxon>Lactobacillales</taxon>
        <taxon>Streptococcaceae</taxon>
        <taxon>Streptococcus</taxon>
    </lineage>
</organism>
<dbReference type="EC" id="3.1.11.6" evidence="1"/>
<dbReference type="EMBL" id="CP000920">
    <property type="protein sequence ID" value="ACO20528.1"/>
    <property type="molecule type" value="Genomic_DNA"/>
</dbReference>
<dbReference type="RefSeq" id="WP_000417464.1">
    <property type="nucleotide sequence ID" value="NC_012467.1"/>
</dbReference>
<dbReference type="SMR" id="C1CKV3"/>
<dbReference type="GeneID" id="45653497"/>
<dbReference type="KEGG" id="spp:SPP_1248"/>
<dbReference type="HOGENOM" id="CLU_023625_3_1_9"/>
<dbReference type="GO" id="GO:0005737">
    <property type="term" value="C:cytoplasm"/>
    <property type="evidence" value="ECO:0007669"/>
    <property type="project" value="UniProtKB-SubCell"/>
</dbReference>
<dbReference type="GO" id="GO:0009318">
    <property type="term" value="C:exodeoxyribonuclease VII complex"/>
    <property type="evidence" value="ECO:0007669"/>
    <property type="project" value="InterPro"/>
</dbReference>
<dbReference type="GO" id="GO:0008855">
    <property type="term" value="F:exodeoxyribonuclease VII activity"/>
    <property type="evidence" value="ECO:0007669"/>
    <property type="project" value="UniProtKB-UniRule"/>
</dbReference>
<dbReference type="GO" id="GO:0003676">
    <property type="term" value="F:nucleic acid binding"/>
    <property type="evidence" value="ECO:0007669"/>
    <property type="project" value="InterPro"/>
</dbReference>
<dbReference type="GO" id="GO:0006308">
    <property type="term" value="P:DNA catabolic process"/>
    <property type="evidence" value="ECO:0007669"/>
    <property type="project" value="UniProtKB-UniRule"/>
</dbReference>
<dbReference type="CDD" id="cd04489">
    <property type="entry name" value="ExoVII_LU_OBF"/>
    <property type="match status" value="1"/>
</dbReference>
<dbReference type="HAMAP" id="MF_00378">
    <property type="entry name" value="Exonuc_7_L"/>
    <property type="match status" value="1"/>
</dbReference>
<dbReference type="InterPro" id="IPR003753">
    <property type="entry name" value="Exonuc_VII_L"/>
</dbReference>
<dbReference type="InterPro" id="IPR020579">
    <property type="entry name" value="Exonuc_VII_lsu_C"/>
</dbReference>
<dbReference type="InterPro" id="IPR025824">
    <property type="entry name" value="OB-fold_nuc-bd_dom"/>
</dbReference>
<dbReference type="NCBIfam" id="TIGR00237">
    <property type="entry name" value="xseA"/>
    <property type="match status" value="1"/>
</dbReference>
<dbReference type="PANTHER" id="PTHR30008">
    <property type="entry name" value="EXODEOXYRIBONUCLEASE 7 LARGE SUBUNIT"/>
    <property type="match status" value="1"/>
</dbReference>
<dbReference type="PANTHER" id="PTHR30008:SF0">
    <property type="entry name" value="EXODEOXYRIBONUCLEASE 7 LARGE SUBUNIT"/>
    <property type="match status" value="1"/>
</dbReference>
<dbReference type="Pfam" id="PF02601">
    <property type="entry name" value="Exonuc_VII_L"/>
    <property type="match status" value="1"/>
</dbReference>
<dbReference type="Pfam" id="PF13742">
    <property type="entry name" value="tRNA_anti_2"/>
    <property type="match status" value="1"/>
</dbReference>
<sequence>MEKYLSVTTLTKYLKMKFDKDPYLERVYLTGQVSNFRKRPTHQYFSLKDDHAVIQATIWSGIYQKLGFDLEEGMKINVIGRVQVYEPSGSYSIIIEKAEPDGVGALAIQFEQLKKKLTEEGLFQERFKQALPQFSKRIGVVTSRSGAVIRDIITTVSRRFPGVDILLYPTKVQGEGAAEEIARNIARANQRDDLDLLIIGRGGGSIEDLWAFNEEIVVRAIFESRLPVISSVGHETDVTLADFVADRRAATPTAAAELATPVTKLDVLAHLQNQEKRMVTAVRNVLSKKQEALKKCSQSVIFRQPERLYDGYLQRLDQLQLRLKQSLRTRISDNKQLVQARTHQLVQLSPVTKIQRYQDRLGQLDKLLGSQMALVYDAKVAEAKRLSEALLMLDTSRIVARGYAIVKKEESVVDSVESLKKKDQVTLLMRDGQVELEVKDVKTKEI</sequence>
<protein>
    <recommendedName>
        <fullName evidence="1">Exodeoxyribonuclease 7 large subunit</fullName>
        <ecNumber evidence="1">3.1.11.6</ecNumber>
    </recommendedName>
    <alternativeName>
        <fullName evidence="1">Exodeoxyribonuclease VII large subunit</fullName>
        <shortName evidence="1">Exonuclease VII large subunit</shortName>
    </alternativeName>
</protein>
<evidence type="ECO:0000255" key="1">
    <source>
        <dbReference type="HAMAP-Rule" id="MF_00378"/>
    </source>
</evidence>
<name>EX7L_STRZP</name>
<feature type="chain" id="PRO_1000200684" description="Exodeoxyribonuclease 7 large subunit">
    <location>
        <begin position="1"/>
        <end position="446"/>
    </location>
</feature>
<accession>C1CKV3</accession>
<gene>
    <name evidence="1" type="primary">xseA</name>
    <name type="ordered locus">SPP_1248</name>
</gene>
<proteinExistence type="inferred from homology"/>
<keyword id="KW-0963">Cytoplasm</keyword>
<keyword id="KW-0269">Exonuclease</keyword>
<keyword id="KW-0378">Hydrolase</keyword>
<keyword id="KW-0540">Nuclease</keyword>
<comment type="function">
    <text evidence="1">Bidirectionally degrades single-stranded DNA into large acid-insoluble oligonucleotides, which are then degraded further into small acid-soluble oligonucleotides.</text>
</comment>
<comment type="catalytic activity">
    <reaction evidence="1">
        <text>Exonucleolytic cleavage in either 5'- to 3'- or 3'- to 5'-direction to yield nucleoside 5'-phosphates.</text>
        <dbReference type="EC" id="3.1.11.6"/>
    </reaction>
</comment>
<comment type="subunit">
    <text evidence="1">Heterooligomer composed of large and small subunits.</text>
</comment>
<comment type="subcellular location">
    <subcellularLocation>
        <location evidence="1">Cytoplasm</location>
    </subcellularLocation>
</comment>
<comment type="similarity">
    <text evidence="1">Belongs to the XseA family.</text>
</comment>
<reference key="1">
    <citation type="journal article" date="2010" name="Genome Biol.">
        <title>Structure and dynamics of the pan-genome of Streptococcus pneumoniae and closely related species.</title>
        <authorList>
            <person name="Donati C."/>
            <person name="Hiller N.L."/>
            <person name="Tettelin H."/>
            <person name="Muzzi A."/>
            <person name="Croucher N.J."/>
            <person name="Angiuoli S.V."/>
            <person name="Oggioni M."/>
            <person name="Dunning Hotopp J.C."/>
            <person name="Hu F.Z."/>
            <person name="Riley D.R."/>
            <person name="Covacci A."/>
            <person name="Mitchell T.J."/>
            <person name="Bentley S.D."/>
            <person name="Kilian M."/>
            <person name="Ehrlich G.D."/>
            <person name="Rappuoli R."/>
            <person name="Moxon E.R."/>
            <person name="Masignani V."/>
        </authorList>
    </citation>
    <scope>NUCLEOTIDE SEQUENCE [LARGE SCALE GENOMIC DNA]</scope>
    <source>
        <strain>P1031</strain>
    </source>
</reference>